<organism>
    <name type="scientific">Streptococcus pyogenes serotype M49 (strain NZ131)</name>
    <dbReference type="NCBI Taxonomy" id="471876"/>
    <lineage>
        <taxon>Bacteria</taxon>
        <taxon>Bacillati</taxon>
        <taxon>Bacillota</taxon>
        <taxon>Bacilli</taxon>
        <taxon>Lactobacillales</taxon>
        <taxon>Streptococcaceae</taxon>
        <taxon>Streptococcus</taxon>
    </lineage>
</organism>
<feature type="chain" id="PRO_1000199757" description="Nucleoside triphosphate/diphosphate phosphatase">
    <location>
        <begin position="1"/>
        <end position="177"/>
    </location>
</feature>
<feature type="active site" description="Proton donor" evidence="1">
    <location>
        <position position="23"/>
    </location>
</feature>
<feature type="binding site" evidence="1">
    <location>
        <position position="87"/>
    </location>
    <ligand>
        <name>Mg(2+)</name>
        <dbReference type="ChEBI" id="CHEBI:18420"/>
        <label>1</label>
    </ligand>
</feature>
<feature type="binding site" evidence="1">
    <location>
        <position position="103"/>
    </location>
    <ligand>
        <name>Mg(2+)</name>
        <dbReference type="ChEBI" id="CHEBI:18420"/>
        <label>1</label>
    </ligand>
</feature>
<feature type="binding site" evidence="1">
    <location>
        <position position="105"/>
    </location>
    <ligand>
        <name>Mg(2+)</name>
        <dbReference type="ChEBI" id="CHEBI:18420"/>
        <label>2</label>
    </ligand>
</feature>
<feature type="binding site" evidence="1">
    <location>
        <position position="107"/>
    </location>
    <ligand>
        <name>Mg(2+)</name>
        <dbReference type="ChEBI" id="CHEBI:18420"/>
        <label>1</label>
    </ligand>
</feature>
<feature type="binding site" evidence="1">
    <location>
        <position position="107"/>
    </location>
    <ligand>
        <name>Mg(2+)</name>
        <dbReference type="ChEBI" id="CHEBI:18420"/>
        <label>2</label>
    </ligand>
</feature>
<feature type="binding site" evidence="1">
    <location>
        <position position="120"/>
    </location>
    <ligand>
        <name>Mg(2+)</name>
        <dbReference type="ChEBI" id="CHEBI:18420"/>
        <label>2</label>
    </ligand>
</feature>
<feature type="binding site" evidence="1">
    <location>
        <position position="123"/>
    </location>
    <ligand>
        <name>Mg(2+)</name>
        <dbReference type="ChEBI" id="CHEBI:18420"/>
        <label>2</label>
    </ligand>
</feature>
<dbReference type="EC" id="3.6.1.15" evidence="1"/>
<dbReference type="EC" id="3.6.1.6" evidence="1"/>
<dbReference type="EMBL" id="CP000829">
    <property type="protein sequence ID" value="ACI61529.1"/>
    <property type="molecule type" value="Genomic_DNA"/>
</dbReference>
<dbReference type="SMR" id="B5XMG7"/>
<dbReference type="KEGG" id="soz:Spy49_1243"/>
<dbReference type="HOGENOM" id="CLU_109787_1_0_9"/>
<dbReference type="Proteomes" id="UP000001039">
    <property type="component" value="Chromosome"/>
</dbReference>
<dbReference type="GO" id="GO:0000287">
    <property type="term" value="F:magnesium ion binding"/>
    <property type="evidence" value="ECO:0007669"/>
    <property type="project" value="UniProtKB-UniRule"/>
</dbReference>
<dbReference type="GO" id="GO:0017110">
    <property type="term" value="F:nucleoside diphosphate phosphatase activity"/>
    <property type="evidence" value="ECO:0007669"/>
    <property type="project" value="UniProtKB-UniRule"/>
</dbReference>
<dbReference type="GO" id="GO:0017111">
    <property type="term" value="F:ribonucleoside triphosphate phosphatase activity"/>
    <property type="evidence" value="ECO:0007669"/>
    <property type="project" value="UniProtKB-UniRule"/>
</dbReference>
<dbReference type="Gene3D" id="2.40.380.10">
    <property type="entry name" value="FomD-like"/>
    <property type="match status" value="1"/>
</dbReference>
<dbReference type="HAMAP" id="MF_01568">
    <property type="entry name" value="Ntdp"/>
    <property type="match status" value="1"/>
</dbReference>
<dbReference type="InterPro" id="IPR007295">
    <property type="entry name" value="DUF402"/>
</dbReference>
<dbReference type="InterPro" id="IPR035930">
    <property type="entry name" value="FomD-like_sf"/>
</dbReference>
<dbReference type="InterPro" id="IPR050212">
    <property type="entry name" value="Ntdp-like"/>
</dbReference>
<dbReference type="InterPro" id="IPR016882">
    <property type="entry name" value="SA1684"/>
</dbReference>
<dbReference type="NCBIfam" id="NF010183">
    <property type="entry name" value="PRK13662.1"/>
    <property type="match status" value="1"/>
</dbReference>
<dbReference type="PANTHER" id="PTHR39159">
    <property type="match status" value="1"/>
</dbReference>
<dbReference type="PANTHER" id="PTHR39159:SF1">
    <property type="entry name" value="UPF0374 PROTEIN YGAC"/>
    <property type="match status" value="1"/>
</dbReference>
<dbReference type="Pfam" id="PF04167">
    <property type="entry name" value="DUF402"/>
    <property type="match status" value="1"/>
</dbReference>
<dbReference type="PIRSF" id="PIRSF028345">
    <property type="entry name" value="UCP028345"/>
    <property type="match status" value="1"/>
</dbReference>
<dbReference type="SUPFAM" id="SSF159234">
    <property type="entry name" value="FomD-like"/>
    <property type="match status" value="1"/>
</dbReference>
<proteinExistence type="inferred from homology"/>
<gene>
    <name type="ordered locus">Spy49_1243</name>
</gene>
<protein>
    <recommendedName>
        <fullName evidence="1">Nucleoside triphosphate/diphosphate phosphatase</fullName>
        <ecNumber evidence="1">3.6.1.15</ecNumber>
        <ecNumber evidence="1">3.6.1.6</ecNumber>
    </recommendedName>
</protein>
<accession>B5XMG7</accession>
<keyword id="KW-0378">Hydrolase</keyword>
<keyword id="KW-0460">Magnesium</keyword>
<keyword id="KW-0479">Metal-binding</keyword>
<sequence length="177" mass="21178">MKLPKEGDFITIQSYKHDGSLHRTWRDTMVLKTTENALIGVNDHTLVTESDGRRWVTREPAIVYFHKKYWFNIIAMIRDNGVSYYCNLASPYMMDTEALKYIDYDLDVKVFADGEKRLLDVDEYEIHKKEMQYSADMDFILKENVKILVDWINHEKGPFSKAYITIWYKRYLELKNR</sequence>
<evidence type="ECO:0000255" key="1">
    <source>
        <dbReference type="HAMAP-Rule" id="MF_01568"/>
    </source>
</evidence>
<name>NTDP_STRPZ</name>
<comment type="function">
    <text evidence="1">Has nucleoside phosphatase activity towards nucleoside triphosphates and nucleoside diphosphates.</text>
</comment>
<comment type="catalytic activity">
    <reaction evidence="1">
        <text>a ribonucleoside 5'-triphosphate + H2O = a ribonucleoside 5'-diphosphate + phosphate + H(+)</text>
        <dbReference type="Rhea" id="RHEA:23680"/>
        <dbReference type="ChEBI" id="CHEBI:15377"/>
        <dbReference type="ChEBI" id="CHEBI:15378"/>
        <dbReference type="ChEBI" id="CHEBI:43474"/>
        <dbReference type="ChEBI" id="CHEBI:57930"/>
        <dbReference type="ChEBI" id="CHEBI:61557"/>
        <dbReference type="EC" id="3.6.1.15"/>
    </reaction>
</comment>
<comment type="catalytic activity">
    <reaction evidence="1">
        <text>a ribonucleoside 5'-diphosphate + H2O = a ribonucleoside 5'-phosphate + phosphate + H(+)</text>
        <dbReference type="Rhea" id="RHEA:36799"/>
        <dbReference type="ChEBI" id="CHEBI:15377"/>
        <dbReference type="ChEBI" id="CHEBI:15378"/>
        <dbReference type="ChEBI" id="CHEBI:43474"/>
        <dbReference type="ChEBI" id="CHEBI:57930"/>
        <dbReference type="ChEBI" id="CHEBI:58043"/>
        <dbReference type="EC" id="3.6.1.6"/>
    </reaction>
</comment>
<comment type="cofactor">
    <cofactor evidence="1">
        <name>Mg(2+)</name>
        <dbReference type="ChEBI" id="CHEBI:18420"/>
    </cofactor>
</comment>
<comment type="similarity">
    <text evidence="1">Belongs to the Ntdp family.</text>
</comment>
<reference key="1">
    <citation type="journal article" date="2008" name="J. Bacteriol.">
        <title>Genome sequence of a nephritogenic and highly transformable M49 strain of Streptococcus pyogenes.</title>
        <authorList>
            <person name="McShan W.M."/>
            <person name="Ferretti J.J."/>
            <person name="Karasawa T."/>
            <person name="Suvorov A.N."/>
            <person name="Lin S."/>
            <person name="Qin B."/>
            <person name="Jia H."/>
            <person name="Kenton S."/>
            <person name="Najar F."/>
            <person name="Wu H."/>
            <person name="Scott J."/>
            <person name="Roe B.A."/>
            <person name="Savic D.J."/>
        </authorList>
    </citation>
    <scope>NUCLEOTIDE SEQUENCE [LARGE SCALE GENOMIC DNA]</scope>
    <source>
        <strain>NZ131</strain>
    </source>
</reference>